<comment type="function">
    <text evidence="1">Repressor of the treBC operon. It is able to bind trehalose-6-phosphate.</text>
</comment>
<comment type="subunit">
    <text evidence="1">Homodimer.</text>
</comment>
<comment type="induction">
    <text evidence="1">Probably induced by trehalose-6-phosphate.</text>
</comment>
<reference key="1">
    <citation type="journal article" date="1995" name="J. Bacteriol.">
        <title>Magnesium transport in Salmonella typhimurium: mgtA encodes a P-type ATPase and is regulated by Mg2+ in a manner similar to that of the mgtB P-type ATPase.</title>
        <authorList>
            <person name="Tao T."/>
            <person name="Snavely M.D."/>
            <person name="Farr S.G."/>
            <person name="Maguire M.E."/>
        </authorList>
    </citation>
    <scope>NUCLEOTIDE SEQUENCE [GENOMIC DNA]</scope>
    <source>
        <strain>LT2</strain>
    </source>
</reference>
<reference key="2">
    <citation type="journal article" date="2001" name="Nature">
        <title>Complete genome sequence of Salmonella enterica serovar Typhimurium LT2.</title>
        <authorList>
            <person name="McClelland M."/>
            <person name="Sanderson K.E."/>
            <person name="Spieth J."/>
            <person name="Clifton S.W."/>
            <person name="Latreille P."/>
            <person name="Courtney L."/>
            <person name="Porwollik S."/>
            <person name="Ali J."/>
            <person name="Dante M."/>
            <person name="Du F."/>
            <person name="Hou S."/>
            <person name="Layman D."/>
            <person name="Leonard S."/>
            <person name="Nguyen C."/>
            <person name="Scott K."/>
            <person name="Holmes A."/>
            <person name="Grewal N."/>
            <person name="Mulvaney E."/>
            <person name="Ryan E."/>
            <person name="Sun H."/>
            <person name="Florea L."/>
            <person name="Miller W."/>
            <person name="Stoneking T."/>
            <person name="Nhan M."/>
            <person name="Waterston R."/>
            <person name="Wilson R.K."/>
        </authorList>
    </citation>
    <scope>NUCLEOTIDE SEQUENCE [LARGE SCALE GENOMIC DNA]</scope>
    <source>
        <strain>LT2 / SGSC1412 / ATCC 700720</strain>
    </source>
</reference>
<accession>P36674</accession>
<evidence type="ECO:0000250" key="1">
    <source>
        <dbReference type="UniProtKB" id="P36673"/>
    </source>
</evidence>
<evidence type="ECO:0000255" key="2">
    <source>
        <dbReference type="PROSITE-ProRule" id="PRU00111"/>
    </source>
</evidence>
<sequence length="315" mass="34753">MQNRLTIKDIARLSGVGKSTVSRVLNNESGVSERTRERVEAVMNQHGFSPSRSARAMRGQSDKVVAIIVTRLDSLSENLAVQTMLPAFYEQGYDPIMMESQFSPTLVMEHLGMLRRRNIDGVVLFGFTGITEELIAPWKASLVLLARDAQGFASVCYDDEGAIHILMQRLYEQGHRNISFLGVPHSDITTGKRRHDAYLAFCKKHKLHPVAALPGLAMKQGYEHTASVIMPDTTALVCATDTLALGASKYLQEQRIETLQLASVGNTPLIKFLHPEIVTVDPGYAEAGRQAASQLIEQINGRCDPRRIVIPSTLA</sequence>
<organism>
    <name type="scientific">Salmonella typhimurium (strain LT2 / SGSC1412 / ATCC 700720)</name>
    <dbReference type="NCBI Taxonomy" id="99287"/>
    <lineage>
        <taxon>Bacteria</taxon>
        <taxon>Pseudomonadati</taxon>
        <taxon>Pseudomonadota</taxon>
        <taxon>Gammaproteobacteria</taxon>
        <taxon>Enterobacterales</taxon>
        <taxon>Enterobacteriaceae</taxon>
        <taxon>Salmonella</taxon>
    </lineage>
</organism>
<name>TRER_SALTY</name>
<feature type="chain" id="PRO_0000108006" description="HTH-type transcriptional regulator TreR">
    <location>
        <begin position="1"/>
        <end position="315"/>
    </location>
</feature>
<feature type="domain" description="HTH lacI-type" evidence="2">
    <location>
        <begin position="5"/>
        <end position="59"/>
    </location>
</feature>
<feature type="DNA-binding region" description="H-T-H motif" evidence="2">
    <location>
        <begin position="7"/>
        <end position="26"/>
    </location>
</feature>
<feature type="binding site" evidence="1">
    <location>
        <begin position="71"/>
        <end position="77"/>
    </location>
    <ligand>
        <name>alpha,alpha-trehalose 6-phosphate</name>
        <dbReference type="ChEBI" id="CHEBI:58429"/>
    </ligand>
</feature>
<feature type="binding site" evidence="1">
    <location>
        <position position="126"/>
    </location>
    <ligand>
        <name>alpha,alpha-trehalose 6-phosphate</name>
        <dbReference type="ChEBI" id="CHEBI:58429"/>
    </ligand>
</feature>
<feature type="binding site" evidence="1">
    <location>
        <position position="147"/>
    </location>
    <ligand>
        <name>alpha,alpha-trehalose 6-phosphate</name>
        <dbReference type="ChEBI" id="CHEBI:58429"/>
    </ligand>
</feature>
<feature type="binding site" evidence="1">
    <location>
        <begin position="187"/>
        <end position="190"/>
    </location>
    <ligand>
        <name>alpha,alpha-trehalose 6-phosphate</name>
        <dbReference type="ChEBI" id="CHEBI:58429"/>
    </ligand>
</feature>
<feature type="binding site" evidence="1">
    <location>
        <position position="194"/>
    </location>
    <ligand>
        <name>alpha,alpha-trehalose 6-phosphate</name>
        <dbReference type="ChEBI" id="CHEBI:58429"/>
    </ligand>
</feature>
<feature type="binding site" evidence="1">
    <location>
        <position position="242"/>
    </location>
    <ligand>
        <name>alpha,alpha-trehalose 6-phosphate</name>
        <dbReference type="ChEBI" id="CHEBI:58429"/>
    </ligand>
</feature>
<feature type="binding site" evidence="1">
    <location>
        <position position="284"/>
    </location>
    <ligand>
        <name>alpha,alpha-trehalose 6-phosphate</name>
        <dbReference type="ChEBI" id="CHEBI:58429"/>
    </ligand>
</feature>
<proteinExistence type="inferred from homology"/>
<gene>
    <name type="primary">treR</name>
    <name type="ordered locus">STM4455</name>
</gene>
<dbReference type="EMBL" id="U07843">
    <property type="protein sequence ID" value="AAA68987.1"/>
    <property type="molecule type" value="Genomic_DNA"/>
</dbReference>
<dbReference type="EMBL" id="AE006468">
    <property type="protein sequence ID" value="AAL23274.1"/>
    <property type="molecule type" value="Genomic_DNA"/>
</dbReference>
<dbReference type="PIR" id="A57147">
    <property type="entry name" value="A57147"/>
</dbReference>
<dbReference type="RefSeq" id="NP_463315.1">
    <property type="nucleotide sequence ID" value="NC_003197.2"/>
</dbReference>
<dbReference type="RefSeq" id="WP_001181297.1">
    <property type="nucleotide sequence ID" value="NC_003197.2"/>
</dbReference>
<dbReference type="SMR" id="P36674"/>
<dbReference type="STRING" id="99287.STM4455"/>
<dbReference type="PaxDb" id="99287-STM4455"/>
<dbReference type="GeneID" id="1255981"/>
<dbReference type="KEGG" id="stm:STM4455"/>
<dbReference type="PATRIC" id="fig|99287.12.peg.4687"/>
<dbReference type="HOGENOM" id="CLU_037628_9_0_6"/>
<dbReference type="PhylomeDB" id="P36674"/>
<dbReference type="BioCyc" id="SENT99287:STM4455-MONOMER"/>
<dbReference type="Proteomes" id="UP000001014">
    <property type="component" value="Chromosome"/>
</dbReference>
<dbReference type="GO" id="GO:0003700">
    <property type="term" value="F:DNA-binding transcription factor activity"/>
    <property type="evidence" value="ECO:0000318"/>
    <property type="project" value="GO_Central"/>
</dbReference>
<dbReference type="GO" id="GO:0000976">
    <property type="term" value="F:transcription cis-regulatory region binding"/>
    <property type="evidence" value="ECO:0000318"/>
    <property type="project" value="GO_Central"/>
</dbReference>
<dbReference type="GO" id="GO:0045892">
    <property type="term" value="P:negative regulation of DNA-templated transcription"/>
    <property type="evidence" value="ECO:0007669"/>
    <property type="project" value="InterPro"/>
</dbReference>
<dbReference type="GO" id="GO:0006355">
    <property type="term" value="P:regulation of DNA-templated transcription"/>
    <property type="evidence" value="ECO:0000318"/>
    <property type="project" value="GO_Central"/>
</dbReference>
<dbReference type="GO" id="GO:0005991">
    <property type="term" value="P:trehalose metabolic process"/>
    <property type="evidence" value="ECO:0007669"/>
    <property type="project" value="InterPro"/>
</dbReference>
<dbReference type="CDD" id="cd01392">
    <property type="entry name" value="HTH_LacI"/>
    <property type="match status" value="1"/>
</dbReference>
<dbReference type="CDD" id="cd01542">
    <property type="entry name" value="PBP1_TreR-like"/>
    <property type="match status" value="1"/>
</dbReference>
<dbReference type="FunFam" id="1.10.260.40:FF:000021">
    <property type="entry name" value="Trehalose operon repressor"/>
    <property type="match status" value="1"/>
</dbReference>
<dbReference type="Gene3D" id="3.40.50.2300">
    <property type="match status" value="2"/>
</dbReference>
<dbReference type="Gene3D" id="1.10.260.40">
    <property type="entry name" value="lambda repressor-like DNA-binding domains"/>
    <property type="match status" value="1"/>
</dbReference>
<dbReference type="InterPro" id="IPR000843">
    <property type="entry name" value="HTH_LacI"/>
</dbReference>
<dbReference type="InterPro" id="IPR046335">
    <property type="entry name" value="LacI/GalR-like_sensor"/>
</dbReference>
<dbReference type="InterPro" id="IPR010982">
    <property type="entry name" value="Lambda_DNA-bd_dom_sf"/>
</dbReference>
<dbReference type="InterPro" id="IPR028082">
    <property type="entry name" value="Peripla_BP_I"/>
</dbReference>
<dbReference type="InterPro" id="IPR012771">
    <property type="entry name" value="Trehalos_R_gpbac"/>
</dbReference>
<dbReference type="NCBIfam" id="TIGR02405">
    <property type="entry name" value="trehalos_R_Ecol"/>
    <property type="match status" value="1"/>
</dbReference>
<dbReference type="PANTHER" id="PTHR30146:SF146">
    <property type="entry name" value="HTH-TYPE TRANSCRIPTIONAL REGULATOR TRER"/>
    <property type="match status" value="1"/>
</dbReference>
<dbReference type="PANTHER" id="PTHR30146">
    <property type="entry name" value="LACI-RELATED TRANSCRIPTIONAL REPRESSOR"/>
    <property type="match status" value="1"/>
</dbReference>
<dbReference type="Pfam" id="PF00356">
    <property type="entry name" value="LacI"/>
    <property type="match status" value="1"/>
</dbReference>
<dbReference type="Pfam" id="PF13377">
    <property type="entry name" value="Peripla_BP_3"/>
    <property type="match status" value="1"/>
</dbReference>
<dbReference type="PRINTS" id="PR00036">
    <property type="entry name" value="HTHLACI"/>
</dbReference>
<dbReference type="SMART" id="SM00354">
    <property type="entry name" value="HTH_LACI"/>
    <property type="match status" value="1"/>
</dbReference>
<dbReference type="SUPFAM" id="SSF47413">
    <property type="entry name" value="lambda repressor-like DNA-binding domains"/>
    <property type="match status" value="1"/>
</dbReference>
<dbReference type="SUPFAM" id="SSF53822">
    <property type="entry name" value="Periplasmic binding protein-like I"/>
    <property type="match status" value="1"/>
</dbReference>
<dbReference type="PROSITE" id="PS00356">
    <property type="entry name" value="HTH_LACI_1"/>
    <property type="match status" value="1"/>
</dbReference>
<dbReference type="PROSITE" id="PS50932">
    <property type="entry name" value="HTH_LACI_2"/>
    <property type="match status" value="1"/>
</dbReference>
<keyword id="KW-0238">DNA-binding</keyword>
<keyword id="KW-1185">Reference proteome</keyword>
<keyword id="KW-0678">Repressor</keyword>
<keyword id="KW-0804">Transcription</keyword>
<keyword id="KW-0805">Transcription regulation</keyword>
<protein>
    <recommendedName>
        <fullName evidence="1">HTH-type transcriptional regulator TreR</fullName>
    </recommendedName>
    <alternativeName>
        <fullName evidence="1">Trehalose operon repressor</fullName>
    </alternativeName>
</protein>